<comment type="function">
    <text evidence="1">Displays ATPase and GTPase activities.</text>
</comment>
<comment type="similarity">
    <text evidence="1">Belongs to the RapZ-like family.</text>
</comment>
<proteinExistence type="inferred from homology"/>
<name>Y3400_CLOD6</name>
<gene>
    <name type="ordered locus">CD630_34000</name>
</gene>
<dbReference type="EMBL" id="AM180355">
    <property type="protein sequence ID" value="CAJ70303.1"/>
    <property type="molecule type" value="Genomic_DNA"/>
</dbReference>
<dbReference type="RefSeq" id="YP_001089920.1">
    <property type="nucleotide sequence ID" value="NC_009089.1"/>
</dbReference>
<dbReference type="SMR" id="Q180P8"/>
<dbReference type="STRING" id="272563.CD630_34000"/>
<dbReference type="EnsemblBacteria" id="CAJ70303">
    <property type="protein sequence ID" value="CAJ70303"/>
    <property type="gene ID" value="CD630_34000"/>
</dbReference>
<dbReference type="KEGG" id="cdf:CD630_34000"/>
<dbReference type="KEGG" id="pdc:CDIF630_03705"/>
<dbReference type="PATRIC" id="fig|272563.120.peg.3594"/>
<dbReference type="eggNOG" id="COG1660">
    <property type="taxonomic scope" value="Bacteria"/>
</dbReference>
<dbReference type="OrthoDB" id="9784461at2"/>
<dbReference type="PhylomeDB" id="Q180P8"/>
<dbReference type="BioCyc" id="PDIF272563:G12WB-3574-MONOMER"/>
<dbReference type="Proteomes" id="UP000001978">
    <property type="component" value="Chromosome"/>
</dbReference>
<dbReference type="GO" id="GO:0005524">
    <property type="term" value="F:ATP binding"/>
    <property type="evidence" value="ECO:0007669"/>
    <property type="project" value="UniProtKB-UniRule"/>
</dbReference>
<dbReference type="GO" id="GO:0005525">
    <property type="term" value="F:GTP binding"/>
    <property type="evidence" value="ECO:0007669"/>
    <property type="project" value="UniProtKB-UniRule"/>
</dbReference>
<dbReference type="Gene3D" id="3.40.50.300">
    <property type="entry name" value="P-loop containing nucleotide triphosphate hydrolases"/>
    <property type="match status" value="1"/>
</dbReference>
<dbReference type="HAMAP" id="MF_00636">
    <property type="entry name" value="RapZ_like"/>
    <property type="match status" value="1"/>
</dbReference>
<dbReference type="InterPro" id="IPR027417">
    <property type="entry name" value="P-loop_NTPase"/>
</dbReference>
<dbReference type="InterPro" id="IPR005337">
    <property type="entry name" value="RapZ-like"/>
</dbReference>
<dbReference type="InterPro" id="IPR053930">
    <property type="entry name" value="RapZ-like_N"/>
</dbReference>
<dbReference type="InterPro" id="IPR053931">
    <property type="entry name" value="RapZ_C"/>
</dbReference>
<dbReference type="NCBIfam" id="NF003828">
    <property type="entry name" value="PRK05416.1"/>
    <property type="match status" value="1"/>
</dbReference>
<dbReference type="PANTHER" id="PTHR30448">
    <property type="entry name" value="RNASE ADAPTER PROTEIN RAPZ"/>
    <property type="match status" value="1"/>
</dbReference>
<dbReference type="PANTHER" id="PTHR30448:SF0">
    <property type="entry name" value="RNASE ADAPTER PROTEIN RAPZ"/>
    <property type="match status" value="1"/>
</dbReference>
<dbReference type="Pfam" id="PF22740">
    <property type="entry name" value="PapZ_C"/>
    <property type="match status" value="1"/>
</dbReference>
<dbReference type="Pfam" id="PF03668">
    <property type="entry name" value="RapZ-like_N"/>
    <property type="match status" value="1"/>
</dbReference>
<dbReference type="PIRSF" id="PIRSF005052">
    <property type="entry name" value="P-loopkin"/>
    <property type="match status" value="1"/>
</dbReference>
<dbReference type="SUPFAM" id="SSF52540">
    <property type="entry name" value="P-loop containing nucleoside triphosphate hydrolases"/>
    <property type="match status" value="1"/>
</dbReference>
<organism>
    <name type="scientific">Clostridioides difficile (strain 630)</name>
    <name type="common">Peptoclostridium difficile</name>
    <dbReference type="NCBI Taxonomy" id="272563"/>
    <lineage>
        <taxon>Bacteria</taxon>
        <taxon>Bacillati</taxon>
        <taxon>Bacillota</taxon>
        <taxon>Clostridia</taxon>
        <taxon>Peptostreptococcales</taxon>
        <taxon>Peptostreptococcaceae</taxon>
        <taxon>Clostridioides</taxon>
    </lineage>
</organism>
<feature type="chain" id="PRO_0000258953" description="Nucleotide-binding protein CD630_34000">
    <location>
        <begin position="1"/>
        <end position="285"/>
    </location>
</feature>
<feature type="binding site" evidence="1">
    <location>
        <begin position="8"/>
        <end position="15"/>
    </location>
    <ligand>
        <name>ATP</name>
        <dbReference type="ChEBI" id="CHEBI:30616"/>
    </ligand>
</feature>
<feature type="binding site" evidence="1">
    <location>
        <begin position="59"/>
        <end position="62"/>
    </location>
    <ligand>
        <name>GTP</name>
        <dbReference type="ChEBI" id="CHEBI:37565"/>
    </ligand>
</feature>
<evidence type="ECO:0000255" key="1">
    <source>
        <dbReference type="HAMAP-Rule" id="MF_00636"/>
    </source>
</evidence>
<keyword id="KW-0067">ATP-binding</keyword>
<keyword id="KW-0342">GTP-binding</keyword>
<keyword id="KW-0547">Nucleotide-binding</keyword>
<keyword id="KW-1185">Reference proteome</keyword>
<protein>
    <recommendedName>
        <fullName evidence="1">Nucleotide-binding protein CD630_34000</fullName>
    </recommendedName>
</protein>
<sequence>MKFVIVTGLSGSGKSETMRALEDMGFYCVDNLPPALITKFAELCYQPNSSIDKVALGIDIRGRKFFEALHESLNYLEKENYEYEMVYLDCNDDVLLKRYKMTRRNHPLAKDMQIPEGIKMERKIMEPLKELSTCIIDTTNMKPKDLKEEIKKIYSSGEDNPNLTISVVSFGFKHGILADADLVFDVRFLPNPYYVEELRAKTGDDKEVRDYVMNSKISEEFYVKLLDMIHFLVPQYIEEGKQHLVIGVGCTGGRHRSVTITNLIAEDLSNKGYRVVKKHRDSMLR</sequence>
<accession>Q180P8</accession>
<reference key="1">
    <citation type="journal article" date="2006" name="Nat. Genet.">
        <title>The multidrug-resistant human pathogen Clostridium difficile has a highly mobile, mosaic genome.</title>
        <authorList>
            <person name="Sebaihia M."/>
            <person name="Wren B.W."/>
            <person name="Mullany P."/>
            <person name="Fairweather N.F."/>
            <person name="Minton N."/>
            <person name="Stabler R."/>
            <person name="Thomson N.R."/>
            <person name="Roberts A.P."/>
            <person name="Cerdeno-Tarraga A.M."/>
            <person name="Wang H."/>
            <person name="Holden M.T.G."/>
            <person name="Wright A."/>
            <person name="Churcher C."/>
            <person name="Quail M.A."/>
            <person name="Baker S."/>
            <person name="Bason N."/>
            <person name="Brooks K."/>
            <person name="Chillingworth T."/>
            <person name="Cronin A."/>
            <person name="Davis P."/>
            <person name="Dowd L."/>
            <person name="Fraser A."/>
            <person name="Feltwell T."/>
            <person name="Hance Z."/>
            <person name="Holroyd S."/>
            <person name="Jagels K."/>
            <person name="Moule S."/>
            <person name="Mungall K."/>
            <person name="Price C."/>
            <person name="Rabbinowitsch E."/>
            <person name="Sharp S."/>
            <person name="Simmonds M."/>
            <person name="Stevens K."/>
            <person name="Unwin L."/>
            <person name="Whithead S."/>
            <person name="Dupuy B."/>
            <person name="Dougan G."/>
            <person name="Barrell B."/>
            <person name="Parkhill J."/>
        </authorList>
    </citation>
    <scope>NUCLEOTIDE SEQUENCE [LARGE SCALE GENOMIC DNA]</scope>
    <source>
        <strain>630</strain>
    </source>
</reference>